<evidence type="ECO:0000255" key="1">
    <source>
        <dbReference type="HAMAP-Rule" id="MF_01399"/>
    </source>
</evidence>
<organism>
    <name type="scientific">Prochlorococcus marinus (strain AS9601)</name>
    <dbReference type="NCBI Taxonomy" id="146891"/>
    <lineage>
        <taxon>Bacteria</taxon>
        <taxon>Bacillati</taxon>
        <taxon>Cyanobacteriota</taxon>
        <taxon>Cyanophyceae</taxon>
        <taxon>Synechococcales</taxon>
        <taxon>Prochlorococcaceae</taxon>
        <taxon>Prochlorococcus</taxon>
    </lineage>
</organism>
<name>ATPF2_PROMS</name>
<keyword id="KW-0066">ATP synthesis</keyword>
<keyword id="KW-0138">CF(0)</keyword>
<keyword id="KW-0375">Hydrogen ion transport</keyword>
<keyword id="KW-0406">Ion transport</keyword>
<keyword id="KW-0472">Membrane</keyword>
<keyword id="KW-0793">Thylakoid</keyword>
<keyword id="KW-0812">Transmembrane</keyword>
<keyword id="KW-1133">Transmembrane helix</keyword>
<keyword id="KW-0813">Transport</keyword>
<accession>A2BT28</accession>
<feature type="chain" id="PRO_0000369021" description="ATP synthase subunit b'">
    <location>
        <begin position="1"/>
        <end position="153"/>
    </location>
</feature>
<feature type="transmembrane region" description="Helical" evidence="1">
    <location>
        <begin position="23"/>
        <end position="40"/>
    </location>
</feature>
<proteinExistence type="inferred from homology"/>
<sequence>MLAFNFFGATEGGLFDINATLPLMAIQVVALTYILNSLFFKPVGNVVEKREKFVSNNIIEAKNKLSEVKKLEADLLTQLQSARTEAQRIVSEAENESDKLYKEALELANNEANASKEKARLEIESQTSAARDQLSKQADDLSELIVNRLILEK</sequence>
<reference key="1">
    <citation type="journal article" date="2007" name="PLoS Genet.">
        <title>Patterns and implications of gene gain and loss in the evolution of Prochlorococcus.</title>
        <authorList>
            <person name="Kettler G.C."/>
            <person name="Martiny A.C."/>
            <person name="Huang K."/>
            <person name="Zucker J."/>
            <person name="Coleman M.L."/>
            <person name="Rodrigue S."/>
            <person name="Chen F."/>
            <person name="Lapidus A."/>
            <person name="Ferriera S."/>
            <person name="Johnson J."/>
            <person name="Steglich C."/>
            <person name="Church G.M."/>
            <person name="Richardson P."/>
            <person name="Chisholm S.W."/>
        </authorList>
    </citation>
    <scope>NUCLEOTIDE SEQUENCE [LARGE SCALE GENOMIC DNA]</scope>
    <source>
        <strain>AS9601</strain>
    </source>
</reference>
<gene>
    <name evidence="1" type="primary">atpF2</name>
    <name evidence="1" type="synonym">atpG</name>
    <name type="ordered locus">A9601_16561</name>
</gene>
<comment type="function">
    <text evidence="1">F(1)F(0) ATP synthase produces ATP from ADP in the presence of a proton or sodium gradient. F-type ATPases consist of two structural domains, F(1) containing the extramembraneous catalytic core and F(0) containing the membrane proton channel, linked together by a central stalk and a peripheral stalk. During catalysis, ATP synthesis in the catalytic domain of F(1) is coupled via a rotary mechanism of the central stalk subunits to proton translocation.</text>
</comment>
<comment type="function">
    <text evidence="1">Component of the F(0) channel, it forms part of the peripheral stalk, linking F(1) to F(0). The b'-subunit is a diverged and duplicated form of b found in plants and photosynthetic bacteria.</text>
</comment>
<comment type="subunit">
    <text evidence="1">F-type ATPases have 2 components, F(1) - the catalytic core - and F(0) - the membrane proton channel. F(1) has five subunits: alpha(3), beta(3), gamma(1), delta(1), epsilon(1). F(0) has four main subunits: a(1), b(1), b'(1) and c(10-14). The alpha and beta chains form an alternating ring which encloses part of the gamma chain. F(1) is attached to F(0) by a central stalk formed by the gamma and epsilon chains, while a peripheral stalk is formed by the delta, b and b' chains.</text>
</comment>
<comment type="subcellular location">
    <subcellularLocation>
        <location evidence="1">Cellular thylakoid membrane</location>
        <topology evidence="1">Single-pass membrane protein</topology>
    </subcellularLocation>
</comment>
<comment type="similarity">
    <text evidence="1">Belongs to the ATPase B chain family.</text>
</comment>
<dbReference type="EMBL" id="CP000551">
    <property type="protein sequence ID" value="ABM70939.1"/>
    <property type="molecule type" value="Genomic_DNA"/>
</dbReference>
<dbReference type="RefSeq" id="WP_011819069.1">
    <property type="nucleotide sequence ID" value="NC_008816.1"/>
</dbReference>
<dbReference type="SMR" id="A2BT28"/>
<dbReference type="STRING" id="146891.A9601_16561"/>
<dbReference type="KEGG" id="pmb:A9601_16561"/>
<dbReference type="eggNOG" id="COG0711">
    <property type="taxonomic scope" value="Bacteria"/>
</dbReference>
<dbReference type="HOGENOM" id="CLU_079215_9_0_3"/>
<dbReference type="OrthoDB" id="426571at2"/>
<dbReference type="Proteomes" id="UP000002590">
    <property type="component" value="Chromosome"/>
</dbReference>
<dbReference type="GO" id="GO:0031676">
    <property type="term" value="C:plasma membrane-derived thylakoid membrane"/>
    <property type="evidence" value="ECO:0007669"/>
    <property type="project" value="UniProtKB-SubCell"/>
</dbReference>
<dbReference type="GO" id="GO:0045259">
    <property type="term" value="C:proton-transporting ATP synthase complex"/>
    <property type="evidence" value="ECO:0007669"/>
    <property type="project" value="UniProtKB-KW"/>
</dbReference>
<dbReference type="GO" id="GO:0046933">
    <property type="term" value="F:proton-transporting ATP synthase activity, rotational mechanism"/>
    <property type="evidence" value="ECO:0007669"/>
    <property type="project" value="UniProtKB-UniRule"/>
</dbReference>
<dbReference type="GO" id="GO:0046961">
    <property type="term" value="F:proton-transporting ATPase activity, rotational mechanism"/>
    <property type="evidence" value="ECO:0007669"/>
    <property type="project" value="TreeGrafter"/>
</dbReference>
<dbReference type="CDD" id="cd06503">
    <property type="entry name" value="ATP-synt_Fo_b"/>
    <property type="match status" value="1"/>
</dbReference>
<dbReference type="Gene3D" id="1.20.5.620">
    <property type="entry name" value="F1F0 ATP synthase subunit B, membrane domain"/>
    <property type="match status" value="1"/>
</dbReference>
<dbReference type="HAMAP" id="MF_01398">
    <property type="entry name" value="ATP_synth_b_bprime"/>
    <property type="match status" value="1"/>
</dbReference>
<dbReference type="HAMAP" id="MF_01399">
    <property type="entry name" value="ATP_synth_bprime"/>
    <property type="match status" value="1"/>
</dbReference>
<dbReference type="InterPro" id="IPR034679">
    <property type="entry name" value="ATP_synth_b"/>
</dbReference>
<dbReference type="InterPro" id="IPR028987">
    <property type="entry name" value="ATP_synth_B-like_membr_sf"/>
</dbReference>
<dbReference type="InterPro" id="IPR002146">
    <property type="entry name" value="ATP_synth_b/b'su_bac/chlpt"/>
</dbReference>
<dbReference type="InterPro" id="IPR050059">
    <property type="entry name" value="ATP_synthase_B_chain"/>
</dbReference>
<dbReference type="NCBIfam" id="NF005607">
    <property type="entry name" value="PRK07353.1"/>
    <property type="match status" value="1"/>
</dbReference>
<dbReference type="PANTHER" id="PTHR33445">
    <property type="entry name" value="ATP SYNTHASE SUBUNIT B', CHLOROPLASTIC"/>
    <property type="match status" value="1"/>
</dbReference>
<dbReference type="PANTHER" id="PTHR33445:SF2">
    <property type="entry name" value="ATP SYNTHASE SUBUNIT B', CHLOROPLASTIC"/>
    <property type="match status" value="1"/>
</dbReference>
<dbReference type="Pfam" id="PF00430">
    <property type="entry name" value="ATP-synt_B"/>
    <property type="match status" value="1"/>
</dbReference>
<dbReference type="SUPFAM" id="SSF81573">
    <property type="entry name" value="F1F0 ATP synthase subunit B, membrane domain"/>
    <property type="match status" value="1"/>
</dbReference>
<protein>
    <recommendedName>
        <fullName evidence="1">ATP synthase subunit b'</fullName>
    </recommendedName>
    <alternativeName>
        <fullName evidence="1">ATP synthase F(0) sector subunit b'</fullName>
    </alternativeName>
    <alternativeName>
        <fullName evidence="1">ATPase subunit II</fullName>
    </alternativeName>
    <alternativeName>
        <fullName evidence="1">F-type ATPase subunit b'</fullName>
        <shortName evidence="1">F-ATPase subunit b'</shortName>
    </alternativeName>
</protein>